<reference key="1">
    <citation type="journal article" date="2004" name="Mol. Phylogenet. Evol.">
        <title>Phylogeny of Iris based on chloroplast matK gene and trnK intron sequence data.</title>
        <authorList>
            <person name="Wilson C.A."/>
        </authorList>
    </citation>
    <scope>NUCLEOTIDE SEQUENCE [GENOMIC DNA]</scope>
</reference>
<evidence type="ECO:0000255" key="1">
    <source>
        <dbReference type="HAMAP-Rule" id="MF_01390"/>
    </source>
</evidence>
<organism>
    <name type="scientific">Iris cristata</name>
    <name type="common">Dwarf crested iris</name>
    <dbReference type="NCBI Taxonomy" id="292531"/>
    <lineage>
        <taxon>Eukaryota</taxon>
        <taxon>Viridiplantae</taxon>
        <taxon>Streptophyta</taxon>
        <taxon>Embryophyta</taxon>
        <taxon>Tracheophyta</taxon>
        <taxon>Spermatophyta</taxon>
        <taxon>Magnoliopsida</taxon>
        <taxon>Liliopsida</taxon>
        <taxon>Asparagales</taxon>
        <taxon>Iridaceae</taxon>
        <taxon>Iridoideae</taxon>
        <taxon>Irideae</taxon>
        <taxon>Iris</taxon>
    </lineage>
</organism>
<feature type="chain" id="PRO_0000143434" description="Maturase K">
    <location>
        <begin position="1"/>
        <end position="520"/>
    </location>
</feature>
<comment type="function">
    <text evidence="1">Usually encoded in the trnK tRNA gene intron. Probably assists in splicing its own and other chloroplast group II introns.</text>
</comment>
<comment type="subcellular location">
    <subcellularLocation>
        <location>Plastid</location>
        <location>Chloroplast</location>
    </subcellularLocation>
</comment>
<comment type="similarity">
    <text evidence="1">Belongs to the intron maturase 2 family. MatK subfamily.</text>
</comment>
<keyword id="KW-0150">Chloroplast</keyword>
<keyword id="KW-0507">mRNA processing</keyword>
<keyword id="KW-0934">Plastid</keyword>
<keyword id="KW-0694">RNA-binding</keyword>
<keyword id="KW-0819">tRNA processing</keyword>
<accession>Q5GF67</accession>
<dbReference type="EMBL" id="AY596639">
    <property type="protein sequence ID" value="AAW67438.1"/>
    <property type="molecule type" value="Genomic_DNA"/>
</dbReference>
<dbReference type="GO" id="GO:0009507">
    <property type="term" value="C:chloroplast"/>
    <property type="evidence" value="ECO:0007669"/>
    <property type="project" value="UniProtKB-SubCell"/>
</dbReference>
<dbReference type="GO" id="GO:0003723">
    <property type="term" value="F:RNA binding"/>
    <property type="evidence" value="ECO:0007669"/>
    <property type="project" value="UniProtKB-KW"/>
</dbReference>
<dbReference type="GO" id="GO:0006397">
    <property type="term" value="P:mRNA processing"/>
    <property type="evidence" value="ECO:0007669"/>
    <property type="project" value="UniProtKB-KW"/>
</dbReference>
<dbReference type="GO" id="GO:0008380">
    <property type="term" value="P:RNA splicing"/>
    <property type="evidence" value="ECO:0007669"/>
    <property type="project" value="UniProtKB-UniRule"/>
</dbReference>
<dbReference type="GO" id="GO:0008033">
    <property type="term" value="P:tRNA processing"/>
    <property type="evidence" value="ECO:0007669"/>
    <property type="project" value="UniProtKB-KW"/>
</dbReference>
<dbReference type="HAMAP" id="MF_01390">
    <property type="entry name" value="MatK"/>
    <property type="match status" value="1"/>
</dbReference>
<dbReference type="InterPro" id="IPR024937">
    <property type="entry name" value="Domain_X"/>
</dbReference>
<dbReference type="InterPro" id="IPR002866">
    <property type="entry name" value="Maturase_MatK"/>
</dbReference>
<dbReference type="InterPro" id="IPR024942">
    <property type="entry name" value="Maturase_MatK_N"/>
</dbReference>
<dbReference type="PANTHER" id="PTHR34811">
    <property type="entry name" value="MATURASE K"/>
    <property type="match status" value="1"/>
</dbReference>
<dbReference type="PANTHER" id="PTHR34811:SF1">
    <property type="entry name" value="MATURASE K"/>
    <property type="match status" value="1"/>
</dbReference>
<dbReference type="Pfam" id="PF01348">
    <property type="entry name" value="Intron_maturas2"/>
    <property type="match status" value="1"/>
</dbReference>
<dbReference type="Pfam" id="PF01824">
    <property type="entry name" value="MatK_N"/>
    <property type="match status" value="1"/>
</dbReference>
<proteinExistence type="inferred from homology"/>
<geneLocation type="chloroplast"/>
<protein>
    <recommendedName>
        <fullName evidence="1">Maturase K</fullName>
    </recommendedName>
    <alternativeName>
        <fullName evidence="1">Intron maturase</fullName>
    </alternativeName>
</protein>
<sequence length="520" mass="62011">MEELQGYLEKDRSRPFLYPLLFXEYSYALAHDRGLKGSLFYEPTEVFGYDSKSSLALLKRFVIRIYQQNYFLSVVNDSNKNRFVSHHHNNFXYSHXYSQMISEGCAILVEIPFSLRLXSYFEKKEIPKSHNLRSIHSIFPLSEGXLLHLXHVSDILIPHPIHMGILVQILQCWIQDVPLLHFLRFFLHKYHNWNSFLITPKKSIYVFSKENKRLFWFLYNSYVSECEFLLVFPRKQSSYLRLTSFGLFLERRHFHVKMEHLQMQHLILIVVCRDYFQGTLWSFKDPFMHYVRCQGKAVLASKGTHLLMKKWKYNFVNLWQYYFHFWYQSYRIHINQLSNYSFYFLGYLSSLLKNSLTVRNQMLENSFLMDTVTNKFETIVPVIFLIGSLSKAQFCTVSGHPISKPIWADLSDSEIIERFGRMCRNLSHYHSGSSKKQGLYRIKYILRLSCARTLARKHKSTVRTFLRRLGSGLLEEFFTEEEQVLSLILPKTIPFTFYGSHKERIWYLDIIRINDLVNHS</sequence>
<name>MATK_IRICR</name>
<gene>
    <name evidence="1" type="primary">matK</name>
</gene>